<gene>
    <name evidence="1" type="primary">hemL</name>
    <name type="ordered locus">Sbal195_1237</name>
</gene>
<proteinExistence type="inferred from homology"/>
<reference key="1">
    <citation type="submission" date="2007-11" db="EMBL/GenBank/DDBJ databases">
        <title>Complete sequence of chromosome of Shewanella baltica OS195.</title>
        <authorList>
            <consortium name="US DOE Joint Genome Institute"/>
            <person name="Copeland A."/>
            <person name="Lucas S."/>
            <person name="Lapidus A."/>
            <person name="Barry K."/>
            <person name="Glavina del Rio T."/>
            <person name="Dalin E."/>
            <person name="Tice H."/>
            <person name="Pitluck S."/>
            <person name="Chain P."/>
            <person name="Malfatti S."/>
            <person name="Shin M."/>
            <person name="Vergez L."/>
            <person name="Schmutz J."/>
            <person name="Larimer F."/>
            <person name="Land M."/>
            <person name="Hauser L."/>
            <person name="Kyrpides N."/>
            <person name="Kim E."/>
            <person name="Brettar I."/>
            <person name="Rodrigues J."/>
            <person name="Konstantinidis K."/>
            <person name="Klappenbach J."/>
            <person name="Hofle M."/>
            <person name="Tiedje J."/>
            <person name="Richardson P."/>
        </authorList>
    </citation>
    <scope>NUCLEOTIDE SEQUENCE [LARGE SCALE GENOMIC DNA]</scope>
    <source>
        <strain>OS195</strain>
    </source>
</reference>
<organism>
    <name type="scientific">Shewanella baltica (strain OS195)</name>
    <dbReference type="NCBI Taxonomy" id="399599"/>
    <lineage>
        <taxon>Bacteria</taxon>
        <taxon>Pseudomonadati</taxon>
        <taxon>Pseudomonadota</taxon>
        <taxon>Gammaproteobacteria</taxon>
        <taxon>Alteromonadales</taxon>
        <taxon>Shewanellaceae</taxon>
        <taxon>Shewanella</taxon>
    </lineage>
</organism>
<feature type="chain" id="PRO_1000079932" description="Glutamate-1-semialdehyde 2,1-aminomutase">
    <location>
        <begin position="1"/>
        <end position="430"/>
    </location>
</feature>
<feature type="modified residue" description="N6-(pyridoxal phosphate)lysine" evidence="1">
    <location>
        <position position="265"/>
    </location>
</feature>
<sequence>MTRSEALFEQAKKTIPGGVNSPVRAFNGVGGSPLFIEKANGAYIYDADGKAYIDYVGSWGPMILGHNHPKIRAAVLAAVENGLSFGAPTELEVQMAEKVISMVPSIEQVRMVSSGTEATMSAIRLARGFTNRDKILKFEGCYHGHADCLLVKAGSGALTLGQPSSPGIPEDFAKHTLTAVYNDLDSVRTLFEQYPTEISCIIIEPVAGNMNCIPPIPGFLQGLRDICDEFGALMIIDEVMTGFRVSQSGAQGYYGVTPDLTTLGKVIGGGMPVGAFGGRKDVMQFIAPTGPVYQAGTLSGNPIAMSAGLAQMEALCEEGLYEELSAKTKRIAEGFKAAADKHGIPMAINYVGGMFGFFFTEQPEITRFDQVTQCNIEQFRIFYHGMLDEGVYLAPSAYEAGFLSMAHGEEEMRLTLEAADRVLASMKAAS</sequence>
<keyword id="KW-0963">Cytoplasm</keyword>
<keyword id="KW-0413">Isomerase</keyword>
<keyword id="KW-0627">Porphyrin biosynthesis</keyword>
<keyword id="KW-0663">Pyridoxal phosphate</keyword>
<protein>
    <recommendedName>
        <fullName evidence="1">Glutamate-1-semialdehyde 2,1-aminomutase</fullName>
        <shortName evidence="1">GSA</shortName>
        <ecNumber evidence="1">5.4.3.8</ecNumber>
    </recommendedName>
    <alternativeName>
        <fullName evidence="1">Glutamate-1-semialdehyde aminotransferase</fullName>
        <shortName evidence="1">GSA-AT</shortName>
    </alternativeName>
</protein>
<comment type="catalytic activity">
    <reaction evidence="1">
        <text>(S)-4-amino-5-oxopentanoate = 5-aminolevulinate</text>
        <dbReference type="Rhea" id="RHEA:14265"/>
        <dbReference type="ChEBI" id="CHEBI:57501"/>
        <dbReference type="ChEBI" id="CHEBI:356416"/>
        <dbReference type="EC" id="5.4.3.8"/>
    </reaction>
</comment>
<comment type="cofactor">
    <cofactor evidence="1">
        <name>pyridoxal 5'-phosphate</name>
        <dbReference type="ChEBI" id="CHEBI:597326"/>
    </cofactor>
</comment>
<comment type="pathway">
    <text evidence="1">Porphyrin-containing compound metabolism; protoporphyrin-IX biosynthesis; 5-aminolevulinate from L-glutamyl-tRNA(Glu): step 2/2.</text>
</comment>
<comment type="subunit">
    <text evidence="1">Homodimer.</text>
</comment>
<comment type="subcellular location">
    <subcellularLocation>
        <location evidence="1">Cytoplasm</location>
    </subcellularLocation>
</comment>
<comment type="similarity">
    <text evidence="1">Belongs to the class-III pyridoxal-phosphate-dependent aminotransferase family. HemL subfamily.</text>
</comment>
<evidence type="ECO:0000255" key="1">
    <source>
        <dbReference type="HAMAP-Rule" id="MF_00375"/>
    </source>
</evidence>
<dbReference type="EC" id="5.4.3.8" evidence="1"/>
<dbReference type="EMBL" id="CP000891">
    <property type="protein sequence ID" value="ABX48412.1"/>
    <property type="molecule type" value="Genomic_DNA"/>
</dbReference>
<dbReference type="RefSeq" id="WP_006080738.1">
    <property type="nucleotide sequence ID" value="NC_009997.1"/>
</dbReference>
<dbReference type="SMR" id="A9L5J5"/>
<dbReference type="GeneID" id="11771511"/>
<dbReference type="KEGG" id="sbn:Sbal195_1237"/>
<dbReference type="HOGENOM" id="CLU_016922_1_5_6"/>
<dbReference type="UniPathway" id="UPA00251">
    <property type="reaction ID" value="UER00317"/>
</dbReference>
<dbReference type="Proteomes" id="UP000000770">
    <property type="component" value="Chromosome"/>
</dbReference>
<dbReference type="GO" id="GO:0005737">
    <property type="term" value="C:cytoplasm"/>
    <property type="evidence" value="ECO:0007669"/>
    <property type="project" value="UniProtKB-SubCell"/>
</dbReference>
<dbReference type="GO" id="GO:0042286">
    <property type="term" value="F:glutamate-1-semialdehyde 2,1-aminomutase activity"/>
    <property type="evidence" value="ECO:0007669"/>
    <property type="project" value="UniProtKB-UniRule"/>
</dbReference>
<dbReference type="GO" id="GO:0030170">
    <property type="term" value="F:pyridoxal phosphate binding"/>
    <property type="evidence" value="ECO:0007669"/>
    <property type="project" value="InterPro"/>
</dbReference>
<dbReference type="GO" id="GO:0008483">
    <property type="term" value="F:transaminase activity"/>
    <property type="evidence" value="ECO:0007669"/>
    <property type="project" value="InterPro"/>
</dbReference>
<dbReference type="GO" id="GO:0006782">
    <property type="term" value="P:protoporphyrinogen IX biosynthetic process"/>
    <property type="evidence" value="ECO:0007669"/>
    <property type="project" value="UniProtKB-UniRule"/>
</dbReference>
<dbReference type="CDD" id="cd00610">
    <property type="entry name" value="OAT_like"/>
    <property type="match status" value="1"/>
</dbReference>
<dbReference type="FunFam" id="3.40.640.10:FF:000021">
    <property type="entry name" value="Glutamate-1-semialdehyde 2,1-aminomutase"/>
    <property type="match status" value="1"/>
</dbReference>
<dbReference type="Gene3D" id="3.90.1150.10">
    <property type="entry name" value="Aspartate Aminotransferase, domain 1"/>
    <property type="match status" value="1"/>
</dbReference>
<dbReference type="Gene3D" id="3.40.640.10">
    <property type="entry name" value="Type I PLP-dependent aspartate aminotransferase-like (Major domain)"/>
    <property type="match status" value="1"/>
</dbReference>
<dbReference type="HAMAP" id="MF_00375">
    <property type="entry name" value="HemL_aminotrans_3"/>
    <property type="match status" value="1"/>
</dbReference>
<dbReference type="InterPro" id="IPR004639">
    <property type="entry name" value="4pyrrol_synth_GluAld_NH2Trfase"/>
</dbReference>
<dbReference type="InterPro" id="IPR005814">
    <property type="entry name" value="Aminotrans_3"/>
</dbReference>
<dbReference type="InterPro" id="IPR049704">
    <property type="entry name" value="Aminotrans_3_PPA_site"/>
</dbReference>
<dbReference type="InterPro" id="IPR015424">
    <property type="entry name" value="PyrdxlP-dep_Trfase"/>
</dbReference>
<dbReference type="InterPro" id="IPR015421">
    <property type="entry name" value="PyrdxlP-dep_Trfase_major"/>
</dbReference>
<dbReference type="InterPro" id="IPR015422">
    <property type="entry name" value="PyrdxlP-dep_Trfase_small"/>
</dbReference>
<dbReference type="NCBIfam" id="TIGR00713">
    <property type="entry name" value="hemL"/>
    <property type="match status" value="1"/>
</dbReference>
<dbReference type="NCBIfam" id="NF000818">
    <property type="entry name" value="PRK00062.1"/>
    <property type="match status" value="1"/>
</dbReference>
<dbReference type="PANTHER" id="PTHR43713">
    <property type="entry name" value="GLUTAMATE-1-SEMIALDEHYDE 2,1-AMINOMUTASE"/>
    <property type="match status" value="1"/>
</dbReference>
<dbReference type="PANTHER" id="PTHR43713:SF3">
    <property type="entry name" value="GLUTAMATE-1-SEMIALDEHYDE 2,1-AMINOMUTASE 1, CHLOROPLASTIC-RELATED"/>
    <property type="match status" value="1"/>
</dbReference>
<dbReference type="Pfam" id="PF00202">
    <property type="entry name" value="Aminotran_3"/>
    <property type="match status" value="1"/>
</dbReference>
<dbReference type="SUPFAM" id="SSF53383">
    <property type="entry name" value="PLP-dependent transferases"/>
    <property type="match status" value="1"/>
</dbReference>
<dbReference type="PROSITE" id="PS00600">
    <property type="entry name" value="AA_TRANSFER_CLASS_3"/>
    <property type="match status" value="1"/>
</dbReference>
<name>GSA_SHEB9</name>
<accession>A9L5J5</accession>